<reference key="1">
    <citation type="journal article" date="1997" name="Int. J. Syst. Bacteriol.">
        <title>Citrate synthase gene comparison, a new tool for phylogenetic analysis, and its application for the rickettsiae.</title>
        <authorList>
            <person name="Roux V."/>
            <person name="Rydkina E."/>
            <person name="Eremeeva M."/>
            <person name="Raoult D."/>
        </authorList>
    </citation>
    <scope>NUCLEOTIDE SEQUENCE [GENOMIC DNA]</scope>
    <source>
        <strain>2678</strain>
    </source>
</reference>
<reference key="2">
    <citation type="submission" date="1995-01" db="EMBL/GenBank/DDBJ databases">
        <authorList>
            <person name="Balayeva N."/>
            <person name="Eremeeva M."/>
            <person name="Tissot-Dupont H."/>
            <person name="Zakharov I."/>
            <person name="Raoult D."/>
        </authorList>
    </citation>
    <scope>NUCLEOTIDE SEQUENCE [GENOMIC DNA] OF 264-382</scope>
    <source>
        <strain>2678</strain>
    </source>
</reference>
<feature type="chain" id="PRO_0000169960" description="Citrate synthase">
    <location>
        <begin position="1" status="less than"/>
        <end position="411" status="greater than"/>
    </location>
</feature>
<feature type="active site" evidence="1">
    <location>
        <position position="304"/>
    </location>
</feature>
<feature type="active site" evidence="1">
    <location>
        <position position="363"/>
    </location>
</feature>
<feature type="non-terminal residue">
    <location>
        <position position="1"/>
    </location>
</feature>
<feature type="non-terminal residue">
    <location>
        <position position="411"/>
    </location>
</feature>
<name>CISY_RICCA</name>
<gene>
    <name type="primary">gltA</name>
</gene>
<proteinExistence type="inferred from homology"/>
<dbReference type="EC" id="2.3.3.16"/>
<dbReference type="EMBL" id="U59713">
    <property type="protein sequence ID" value="AAB02957.1"/>
    <property type="molecule type" value="Genomic_DNA"/>
</dbReference>
<dbReference type="EMBL" id="U20241">
    <property type="protein sequence ID" value="AAA85706.1"/>
    <property type="molecule type" value="Genomic_DNA"/>
</dbReference>
<dbReference type="SMR" id="P51041"/>
<dbReference type="UniPathway" id="UPA00223">
    <property type="reaction ID" value="UER00717"/>
</dbReference>
<dbReference type="GO" id="GO:0005737">
    <property type="term" value="C:cytoplasm"/>
    <property type="evidence" value="ECO:0007669"/>
    <property type="project" value="InterPro"/>
</dbReference>
<dbReference type="GO" id="GO:0004108">
    <property type="term" value="F:citrate (Si)-synthase activity"/>
    <property type="evidence" value="ECO:0007669"/>
    <property type="project" value="InterPro"/>
</dbReference>
<dbReference type="GO" id="GO:0006099">
    <property type="term" value="P:tricarboxylic acid cycle"/>
    <property type="evidence" value="ECO:0007669"/>
    <property type="project" value="UniProtKB-UniPathway"/>
</dbReference>
<dbReference type="CDD" id="cd06114">
    <property type="entry name" value="EcCS_like"/>
    <property type="match status" value="1"/>
</dbReference>
<dbReference type="FunFam" id="1.10.230.10:FF:000002">
    <property type="entry name" value="Citrate synthase"/>
    <property type="match status" value="1"/>
</dbReference>
<dbReference type="Gene3D" id="2.20.28.60">
    <property type="match status" value="1"/>
</dbReference>
<dbReference type="Gene3D" id="1.10.580.10">
    <property type="entry name" value="Citrate Synthase, domain 1"/>
    <property type="match status" value="1"/>
</dbReference>
<dbReference type="Gene3D" id="1.10.230.10">
    <property type="entry name" value="Cytochrome P450-Terp, domain 2"/>
    <property type="match status" value="1"/>
</dbReference>
<dbReference type="InterPro" id="IPR016142">
    <property type="entry name" value="Citrate_synth-like_lrg_a-sub"/>
</dbReference>
<dbReference type="InterPro" id="IPR016143">
    <property type="entry name" value="Citrate_synth-like_sm_a-sub"/>
</dbReference>
<dbReference type="InterPro" id="IPR002020">
    <property type="entry name" value="Citrate_synthase"/>
</dbReference>
<dbReference type="InterPro" id="IPR019810">
    <property type="entry name" value="Citrate_synthase_AS"/>
</dbReference>
<dbReference type="InterPro" id="IPR024176">
    <property type="entry name" value="Citrate_synthase_bac-typ"/>
</dbReference>
<dbReference type="InterPro" id="IPR036969">
    <property type="entry name" value="Citrate_synthase_sf"/>
</dbReference>
<dbReference type="InterPro" id="IPR010953">
    <property type="entry name" value="Citrate_synthase_typ-I"/>
</dbReference>
<dbReference type="NCBIfam" id="TIGR01798">
    <property type="entry name" value="cit_synth_I"/>
    <property type="match status" value="1"/>
</dbReference>
<dbReference type="NCBIfam" id="NF004126">
    <property type="entry name" value="PRK05614.1"/>
    <property type="match status" value="1"/>
</dbReference>
<dbReference type="PANTHER" id="PTHR42871">
    <property type="entry name" value="CITRATE SYNTHASE"/>
    <property type="match status" value="1"/>
</dbReference>
<dbReference type="PANTHER" id="PTHR42871:SF1">
    <property type="entry name" value="CITRATE SYNTHASE"/>
    <property type="match status" value="1"/>
</dbReference>
<dbReference type="Pfam" id="PF00285">
    <property type="entry name" value="Citrate_synt"/>
    <property type="match status" value="1"/>
</dbReference>
<dbReference type="PIRSF" id="PIRSF001369">
    <property type="entry name" value="Citrate_synth"/>
    <property type="match status" value="1"/>
</dbReference>
<dbReference type="PRINTS" id="PR00143">
    <property type="entry name" value="CITRTSNTHASE"/>
</dbReference>
<dbReference type="SUPFAM" id="SSF48256">
    <property type="entry name" value="Citrate synthase"/>
    <property type="match status" value="1"/>
</dbReference>
<dbReference type="PROSITE" id="PS00480">
    <property type="entry name" value="CITRATE_SYNTHASE"/>
    <property type="match status" value="1"/>
</dbReference>
<evidence type="ECO:0000255" key="1">
    <source>
        <dbReference type="PROSITE-ProRule" id="PRU10117"/>
    </source>
</evidence>
<evidence type="ECO:0000305" key="2"/>
<organism>
    <name type="scientific">Rickettsia canadensis</name>
    <dbReference type="NCBI Taxonomy" id="788"/>
    <lineage>
        <taxon>Bacteria</taxon>
        <taxon>Pseudomonadati</taxon>
        <taxon>Pseudomonadota</taxon>
        <taxon>Alphaproteobacteria</taxon>
        <taxon>Rickettsiales</taxon>
        <taxon>Rickettsiaceae</taxon>
        <taxon>Rickettsieae</taxon>
        <taxon>Rickettsia</taxon>
        <taxon>belli group</taxon>
    </lineage>
</organism>
<accession>P51041</accession>
<comment type="catalytic activity">
    <reaction evidence="1">
        <text>oxaloacetate + acetyl-CoA + H2O = citrate + CoA + H(+)</text>
        <dbReference type="Rhea" id="RHEA:16845"/>
        <dbReference type="ChEBI" id="CHEBI:15377"/>
        <dbReference type="ChEBI" id="CHEBI:15378"/>
        <dbReference type="ChEBI" id="CHEBI:16452"/>
        <dbReference type="ChEBI" id="CHEBI:16947"/>
        <dbReference type="ChEBI" id="CHEBI:57287"/>
        <dbReference type="ChEBI" id="CHEBI:57288"/>
        <dbReference type="EC" id="2.3.3.16"/>
    </reaction>
</comment>
<comment type="pathway">
    <text>Carbohydrate metabolism; tricarboxylic acid cycle; isocitrate from oxaloacetate: step 1/2.</text>
</comment>
<comment type="miscellaneous">
    <text>Citrate synthase is found in nearly all cells capable of oxidative metabolism.</text>
</comment>
<comment type="similarity">
    <text evidence="2">Belongs to the citrate synthase family.</text>
</comment>
<sequence>DSEFVELKIRGKIFKLPILKASIGEDVIDISRVSSEADCFTYDPGFMSTASCRSTITYIDGDKGILRYRGYDIKDLADKSDFLEVAYLLIYGELPSSEQYNNFTKKVAVHSLVNERLHYLFQTFCSSSHPMAIMLAAVGSLSAFYPDLLNFKEADYELTAIRMIAKIPTMAAMSYKYSIGQPFIYPDNSLDFTENFLHMMFATPCMKYEVNPVIKNALNKIFILHADHEQNASTSTVRIAGSSGANPFACISTGIASLWGPAHGGANEAVINMLKEIGSSENIPKYIAKAKDKDDPFRLMGFGHRVYKNYDPRAAVLKETCNEVLKELGQLENNPLLQIAIELEAIALKDEYFIERKLYPNVDFYSGIIYKAMGIPSQMFTVLFAIARTVGWMAQWKEMHEDPEQKISRPR</sequence>
<protein>
    <recommendedName>
        <fullName>Citrate synthase</fullName>
        <ecNumber>2.3.3.16</ecNumber>
    </recommendedName>
</protein>
<keyword id="KW-0808">Transferase</keyword>
<keyword id="KW-0816">Tricarboxylic acid cycle</keyword>